<dbReference type="EMBL" id="CP000517">
    <property type="protein sequence ID" value="ABX26534.1"/>
    <property type="molecule type" value="Genomic_DNA"/>
</dbReference>
<dbReference type="RefSeq" id="WP_012211376.1">
    <property type="nucleotide sequence ID" value="NC_010080.1"/>
</dbReference>
<dbReference type="SMR" id="A8YXK3"/>
<dbReference type="KEGG" id="lhe:lhv_0310"/>
<dbReference type="eggNOG" id="COG0480">
    <property type="taxonomic scope" value="Bacteria"/>
</dbReference>
<dbReference type="HOGENOM" id="CLU_002794_4_1_9"/>
<dbReference type="Proteomes" id="UP000000790">
    <property type="component" value="Chromosome"/>
</dbReference>
<dbReference type="GO" id="GO:0005737">
    <property type="term" value="C:cytoplasm"/>
    <property type="evidence" value="ECO:0007669"/>
    <property type="project" value="UniProtKB-SubCell"/>
</dbReference>
<dbReference type="GO" id="GO:0005525">
    <property type="term" value="F:GTP binding"/>
    <property type="evidence" value="ECO:0007669"/>
    <property type="project" value="UniProtKB-UniRule"/>
</dbReference>
<dbReference type="GO" id="GO:0003924">
    <property type="term" value="F:GTPase activity"/>
    <property type="evidence" value="ECO:0007669"/>
    <property type="project" value="InterPro"/>
</dbReference>
<dbReference type="GO" id="GO:0003746">
    <property type="term" value="F:translation elongation factor activity"/>
    <property type="evidence" value="ECO:0007669"/>
    <property type="project" value="UniProtKB-UniRule"/>
</dbReference>
<dbReference type="GO" id="GO:0032790">
    <property type="term" value="P:ribosome disassembly"/>
    <property type="evidence" value="ECO:0007669"/>
    <property type="project" value="TreeGrafter"/>
</dbReference>
<dbReference type="CDD" id="cd01886">
    <property type="entry name" value="EF-G"/>
    <property type="match status" value="1"/>
</dbReference>
<dbReference type="CDD" id="cd16262">
    <property type="entry name" value="EFG_III"/>
    <property type="match status" value="1"/>
</dbReference>
<dbReference type="CDD" id="cd01434">
    <property type="entry name" value="EFG_mtEFG1_IV"/>
    <property type="match status" value="1"/>
</dbReference>
<dbReference type="CDD" id="cd03713">
    <property type="entry name" value="EFG_mtEFG_C"/>
    <property type="match status" value="1"/>
</dbReference>
<dbReference type="CDD" id="cd04088">
    <property type="entry name" value="EFG_mtEFG_II"/>
    <property type="match status" value="1"/>
</dbReference>
<dbReference type="FunFam" id="2.40.30.10:FF:000006">
    <property type="entry name" value="Elongation factor G"/>
    <property type="match status" value="1"/>
</dbReference>
<dbReference type="FunFam" id="3.30.230.10:FF:000003">
    <property type="entry name" value="Elongation factor G"/>
    <property type="match status" value="1"/>
</dbReference>
<dbReference type="FunFam" id="3.30.70.240:FF:000001">
    <property type="entry name" value="Elongation factor G"/>
    <property type="match status" value="1"/>
</dbReference>
<dbReference type="FunFam" id="3.30.70.870:FF:000001">
    <property type="entry name" value="Elongation factor G"/>
    <property type="match status" value="1"/>
</dbReference>
<dbReference type="FunFam" id="3.40.50.300:FF:000029">
    <property type="entry name" value="Elongation factor G"/>
    <property type="match status" value="1"/>
</dbReference>
<dbReference type="Gene3D" id="3.30.230.10">
    <property type="match status" value="1"/>
</dbReference>
<dbReference type="Gene3D" id="3.30.70.240">
    <property type="match status" value="1"/>
</dbReference>
<dbReference type="Gene3D" id="3.30.70.870">
    <property type="entry name" value="Elongation Factor G (Translational Gtpase), domain 3"/>
    <property type="match status" value="1"/>
</dbReference>
<dbReference type="Gene3D" id="3.40.50.300">
    <property type="entry name" value="P-loop containing nucleotide triphosphate hydrolases"/>
    <property type="match status" value="1"/>
</dbReference>
<dbReference type="Gene3D" id="2.40.30.10">
    <property type="entry name" value="Translation factors"/>
    <property type="match status" value="1"/>
</dbReference>
<dbReference type="HAMAP" id="MF_00054_B">
    <property type="entry name" value="EF_G_EF_2_B"/>
    <property type="match status" value="1"/>
</dbReference>
<dbReference type="InterPro" id="IPR053905">
    <property type="entry name" value="EF-G-like_DII"/>
</dbReference>
<dbReference type="InterPro" id="IPR041095">
    <property type="entry name" value="EFG_II"/>
</dbReference>
<dbReference type="InterPro" id="IPR009022">
    <property type="entry name" value="EFG_III"/>
</dbReference>
<dbReference type="InterPro" id="IPR035647">
    <property type="entry name" value="EFG_III/V"/>
</dbReference>
<dbReference type="InterPro" id="IPR047872">
    <property type="entry name" value="EFG_IV"/>
</dbReference>
<dbReference type="InterPro" id="IPR035649">
    <property type="entry name" value="EFG_V"/>
</dbReference>
<dbReference type="InterPro" id="IPR000640">
    <property type="entry name" value="EFG_V-like"/>
</dbReference>
<dbReference type="InterPro" id="IPR031157">
    <property type="entry name" value="G_TR_CS"/>
</dbReference>
<dbReference type="InterPro" id="IPR027417">
    <property type="entry name" value="P-loop_NTPase"/>
</dbReference>
<dbReference type="InterPro" id="IPR020568">
    <property type="entry name" value="Ribosomal_Su5_D2-typ_SF"/>
</dbReference>
<dbReference type="InterPro" id="IPR014721">
    <property type="entry name" value="Ribsml_uS5_D2-typ_fold_subgr"/>
</dbReference>
<dbReference type="InterPro" id="IPR005225">
    <property type="entry name" value="Small_GTP-bd"/>
</dbReference>
<dbReference type="InterPro" id="IPR000795">
    <property type="entry name" value="T_Tr_GTP-bd_dom"/>
</dbReference>
<dbReference type="InterPro" id="IPR009000">
    <property type="entry name" value="Transl_B-barrel_sf"/>
</dbReference>
<dbReference type="InterPro" id="IPR004540">
    <property type="entry name" value="Transl_elong_EFG/EF2"/>
</dbReference>
<dbReference type="InterPro" id="IPR005517">
    <property type="entry name" value="Transl_elong_EFG/EF2_IV"/>
</dbReference>
<dbReference type="NCBIfam" id="TIGR00484">
    <property type="entry name" value="EF-G"/>
    <property type="match status" value="1"/>
</dbReference>
<dbReference type="NCBIfam" id="NF009379">
    <property type="entry name" value="PRK12740.1-3"/>
    <property type="match status" value="1"/>
</dbReference>
<dbReference type="NCBIfam" id="NF009381">
    <property type="entry name" value="PRK12740.1-5"/>
    <property type="match status" value="1"/>
</dbReference>
<dbReference type="NCBIfam" id="TIGR00231">
    <property type="entry name" value="small_GTP"/>
    <property type="match status" value="1"/>
</dbReference>
<dbReference type="PANTHER" id="PTHR43261:SF1">
    <property type="entry name" value="RIBOSOME-RELEASING FACTOR 2, MITOCHONDRIAL"/>
    <property type="match status" value="1"/>
</dbReference>
<dbReference type="PANTHER" id="PTHR43261">
    <property type="entry name" value="TRANSLATION ELONGATION FACTOR G-RELATED"/>
    <property type="match status" value="1"/>
</dbReference>
<dbReference type="Pfam" id="PF22042">
    <property type="entry name" value="EF-G_D2"/>
    <property type="match status" value="1"/>
</dbReference>
<dbReference type="Pfam" id="PF00679">
    <property type="entry name" value="EFG_C"/>
    <property type="match status" value="1"/>
</dbReference>
<dbReference type="Pfam" id="PF14492">
    <property type="entry name" value="EFG_III"/>
    <property type="match status" value="1"/>
</dbReference>
<dbReference type="Pfam" id="PF03764">
    <property type="entry name" value="EFG_IV"/>
    <property type="match status" value="1"/>
</dbReference>
<dbReference type="Pfam" id="PF00009">
    <property type="entry name" value="GTP_EFTU"/>
    <property type="match status" value="1"/>
</dbReference>
<dbReference type="PRINTS" id="PR00315">
    <property type="entry name" value="ELONGATNFCT"/>
</dbReference>
<dbReference type="SMART" id="SM00838">
    <property type="entry name" value="EFG_C"/>
    <property type="match status" value="1"/>
</dbReference>
<dbReference type="SMART" id="SM00889">
    <property type="entry name" value="EFG_IV"/>
    <property type="match status" value="1"/>
</dbReference>
<dbReference type="SUPFAM" id="SSF54980">
    <property type="entry name" value="EF-G C-terminal domain-like"/>
    <property type="match status" value="2"/>
</dbReference>
<dbReference type="SUPFAM" id="SSF52540">
    <property type="entry name" value="P-loop containing nucleoside triphosphate hydrolases"/>
    <property type="match status" value="1"/>
</dbReference>
<dbReference type="SUPFAM" id="SSF54211">
    <property type="entry name" value="Ribosomal protein S5 domain 2-like"/>
    <property type="match status" value="1"/>
</dbReference>
<dbReference type="SUPFAM" id="SSF50447">
    <property type="entry name" value="Translation proteins"/>
    <property type="match status" value="1"/>
</dbReference>
<dbReference type="PROSITE" id="PS00301">
    <property type="entry name" value="G_TR_1"/>
    <property type="match status" value="1"/>
</dbReference>
<dbReference type="PROSITE" id="PS51722">
    <property type="entry name" value="G_TR_2"/>
    <property type="match status" value="1"/>
</dbReference>
<name>EFG_LACH4</name>
<keyword id="KW-0963">Cytoplasm</keyword>
<keyword id="KW-0251">Elongation factor</keyword>
<keyword id="KW-0342">GTP-binding</keyword>
<keyword id="KW-0547">Nucleotide-binding</keyword>
<keyword id="KW-0648">Protein biosynthesis</keyword>
<feature type="chain" id="PRO_1000071146" description="Elongation factor G">
    <location>
        <begin position="1"/>
        <end position="697"/>
    </location>
</feature>
<feature type="domain" description="tr-type G">
    <location>
        <begin position="10"/>
        <end position="285"/>
    </location>
</feature>
<feature type="binding site" evidence="1">
    <location>
        <begin position="19"/>
        <end position="26"/>
    </location>
    <ligand>
        <name>GTP</name>
        <dbReference type="ChEBI" id="CHEBI:37565"/>
    </ligand>
</feature>
<feature type="binding site" evidence="1">
    <location>
        <begin position="83"/>
        <end position="87"/>
    </location>
    <ligand>
        <name>GTP</name>
        <dbReference type="ChEBI" id="CHEBI:37565"/>
    </ligand>
</feature>
<feature type="binding site" evidence="1">
    <location>
        <begin position="137"/>
        <end position="140"/>
    </location>
    <ligand>
        <name>GTP</name>
        <dbReference type="ChEBI" id="CHEBI:37565"/>
    </ligand>
</feature>
<gene>
    <name evidence="1" type="primary">fusA</name>
    <name type="ordered locus">lhv_0310</name>
</gene>
<organism>
    <name type="scientific">Lactobacillus helveticus (strain DPC 4571)</name>
    <dbReference type="NCBI Taxonomy" id="405566"/>
    <lineage>
        <taxon>Bacteria</taxon>
        <taxon>Bacillati</taxon>
        <taxon>Bacillota</taxon>
        <taxon>Bacilli</taxon>
        <taxon>Lactobacillales</taxon>
        <taxon>Lactobacillaceae</taxon>
        <taxon>Lactobacillus</taxon>
    </lineage>
</organism>
<accession>A8YXK3</accession>
<protein>
    <recommendedName>
        <fullName evidence="1">Elongation factor G</fullName>
        <shortName evidence="1">EF-G</shortName>
    </recommendedName>
</protein>
<proteinExistence type="inferred from homology"/>
<evidence type="ECO:0000255" key="1">
    <source>
        <dbReference type="HAMAP-Rule" id="MF_00054"/>
    </source>
</evidence>
<sequence>MANKREFPLAKTRNIGIMAHIDAGKTTTTERILYYTGKIHKIGETHEGDSQMDWMDEEKERGITITSAATTAQWKDYRINIIDTPGHVDFTIEVERSLRVLDGAVTVLDAQAGVEPQTENVWRQAETYGVPRIVFVNKMDKIGADFDKSVKSLHERLNANAHAVQMPIGSADTFEGVIDLINMVADIYDEDKLGSKWDTVPIPDQYKEEAEKRRGELIEAVADVDDGIMEKYLGGEEISNDELKAAIRKATLNLEFFPVYAGSAFKNKGVQMMLDGVIDYLPSPLDVKPYVAHDPKTGDEVELMADDKKPFAALAFKIATDPFVGRLTFIRVYTGSLESGSYVLNASKNSRERVGRLLQMHANSRTEIPEVFSGDIAGAIGLKNTTTGDSLTDPDHPLILESLKVPDPVIQVSVEPKSKADRDKMDVALQKLTEEDPTFRAETNPETGQTLISGMGELHLDIMVERMRREFNVDAKIGEPQVAYRETFTKEAEAQGKFVRQSGGKGQYGDVWIDFTPNEEGKGYEFEDAIVGGVVPREFIPSVDQGLQEAMKNGVLAGYPLIDVKAKLYDGSYHEVDSSEAAFKVAASLALKNAASKAGAVILEPIMKVQVTTPEEYLGDVMGSITARRGTMEGMEDRAGAKVINSFVPLSEMFGYATTLRSSTQGRGTFTMVFDHYSPTPKSIQADIIKKRGGEAE</sequence>
<reference key="1">
    <citation type="journal article" date="2008" name="J. Bacteriol.">
        <title>Genome sequence of Lactobacillus helveticus: an organism distinguished by selective gene loss and IS element expansion.</title>
        <authorList>
            <person name="Callanan M."/>
            <person name="Kaleta P."/>
            <person name="O'Callaghan J."/>
            <person name="O'Sullivan O."/>
            <person name="Jordan K."/>
            <person name="McAuliffe O."/>
            <person name="Sangrador-Vegas A."/>
            <person name="Slattery L."/>
            <person name="Fitzgerald G.F."/>
            <person name="Beresford T."/>
            <person name="Ross R.P."/>
        </authorList>
    </citation>
    <scope>NUCLEOTIDE SEQUENCE [LARGE SCALE GENOMIC DNA]</scope>
    <source>
        <strain>DPC 4571</strain>
    </source>
</reference>
<comment type="function">
    <text evidence="1">Catalyzes the GTP-dependent ribosomal translocation step during translation elongation. During this step, the ribosome changes from the pre-translocational (PRE) to the post-translocational (POST) state as the newly formed A-site-bound peptidyl-tRNA and P-site-bound deacylated tRNA move to the P and E sites, respectively. Catalyzes the coordinated movement of the two tRNA molecules, the mRNA and conformational changes in the ribosome.</text>
</comment>
<comment type="subcellular location">
    <subcellularLocation>
        <location evidence="1">Cytoplasm</location>
    </subcellularLocation>
</comment>
<comment type="similarity">
    <text evidence="1">Belongs to the TRAFAC class translation factor GTPase superfamily. Classic translation factor GTPase family. EF-G/EF-2 subfamily.</text>
</comment>